<protein>
    <recommendedName>
        <fullName evidence="1">ATP synthase gamma chain</fullName>
    </recommendedName>
    <alternativeName>
        <fullName evidence="1">ATP synthase F1 sector gamma subunit</fullName>
    </alternativeName>
    <alternativeName>
        <fullName evidence="1">F-ATPase gamma subunit</fullName>
    </alternativeName>
</protein>
<accession>A8GTS7</accession>
<keyword id="KW-0066">ATP synthesis</keyword>
<keyword id="KW-0997">Cell inner membrane</keyword>
<keyword id="KW-1003">Cell membrane</keyword>
<keyword id="KW-0139">CF(1)</keyword>
<keyword id="KW-0375">Hydrogen ion transport</keyword>
<keyword id="KW-0406">Ion transport</keyword>
<keyword id="KW-0472">Membrane</keyword>
<keyword id="KW-0813">Transport</keyword>
<gene>
    <name evidence="1" type="primary">atpG</name>
    <name type="ordered locus">A1G_06765</name>
</gene>
<organism>
    <name type="scientific">Rickettsia rickettsii (strain Sheila Smith)</name>
    <dbReference type="NCBI Taxonomy" id="392021"/>
    <lineage>
        <taxon>Bacteria</taxon>
        <taxon>Pseudomonadati</taxon>
        <taxon>Pseudomonadota</taxon>
        <taxon>Alphaproteobacteria</taxon>
        <taxon>Rickettsiales</taxon>
        <taxon>Rickettsiaceae</taxon>
        <taxon>Rickettsieae</taxon>
        <taxon>Rickettsia</taxon>
        <taxon>spotted fever group</taxon>
    </lineage>
</organism>
<proteinExistence type="inferred from homology"/>
<reference key="1">
    <citation type="submission" date="2007-09" db="EMBL/GenBank/DDBJ databases">
        <title>Complete genome sequence of Rickettsia rickettsii.</title>
        <authorList>
            <person name="Madan A."/>
            <person name="Fahey J."/>
            <person name="Helton E."/>
            <person name="Ketteman M."/>
            <person name="Madan A."/>
            <person name="Rodrigues S."/>
            <person name="Sanchez A."/>
            <person name="Dasch G."/>
            <person name="Eremeeva M."/>
        </authorList>
    </citation>
    <scope>NUCLEOTIDE SEQUENCE [LARGE SCALE GENOMIC DNA]</scope>
    <source>
        <strain>Sheila Smith</strain>
    </source>
</reference>
<evidence type="ECO:0000255" key="1">
    <source>
        <dbReference type="HAMAP-Rule" id="MF_00815"/>
    </source>
</evidence>
<sequence length="323" mass="36636">MSNLKQLRTRIKSVKSTQKITKAMQLVSASKMAKIKSQIANSNFYIEAVSKMMSAILSIDMYELSIEEQKFFNTVPNKANLLIVMTSQRGLCGTFNYSIIQQVKNDIKELENKGEQIKLIIIGKKGYEALKRQYVNYIDSYFELPKIHDENLMLQVKQKIMSAVENLEVSNCVIYFNKFKNAMTQIMTRQQILPVAKYQDDSMIDNPIVNLVGFGYKERGAKPINNRSATSDIVGESKSIDYNYEYEGENLISNLINLYVNSQINYALLQSRASEEGARMTAMENATNNANDLISKLVLKLNRSRQAIITTELIEIIAGSEAV</sequence>
<feature type="chain" id="PRO_1000053316" description="ATP synthase gamma chain">
    <location>
        <begin position="1"/>
        <end position="323"/>
    </location>
</feature>
<comment type="function">
    <text evidence="1">Produces ATP from ADP in the presence of a proton gradient across the membrane. The gamma chain is believed to be important in regulating ATPase activity and the flow of protons through the CF(0) complex.</text>
</comment>
<comment type="subunit">
    <text evidence="1">F-type ATPases have 2 components, CF(1) - the catalytic core - and CF(0) - the membrane proton channel. CF(1) has five subunits: alpha(3), beta(3), gamma(1), delta(1), epsilon(1). CF(0) has three main subunits: a, b and c.</text>
</comment>
<comment type="subcellular location">
    <subcellularLocation>
        <location evidence="1">Cell inner membrane</location>
        <topology evidence="1">Peripheral membrane protein</topology>
    </subcellularLocation>
</comment>
<comment type="similarity">
    <text evidence="1">Belongs to the ATPase gamma chain family.</text>
</comment>
<name>ATPG_RICRS</name>
<dbReference type="EMBL" id="CP000848">
    <property type="protein sequence ID" value="ABV76802.1"/>
    <property type="molecule type" value="Genomic_DNA"/>
</dbReference>
<dbReference type="RefSeq" id="WP_012151344.1">
    <property type="nucleotide sequence ID" value="NZ_CP121767.1"/>
</dbReference>
<dbReference type="SMR" id="A8GTS7"/>
<dbReference type="GeneID" id="79937846"/>
<dbReference type="KEGG" id="rri:A1G_06765"/>
<dbReference type="HOGENOM" id="CLU_050669_0_1_5"/>
<dbReference type="Proteomes" id="UP000006832">
    <property type="component" value="Chromosome"/>
</dbReference>
<dbReference type="GO" id="GO:0005886">
    <property type="term" value="C:plasma membrane"/>
    <property type="evidence" value="ECO:0007669"/>
    <property type="project" value="UniProtKB-SubCell"/>
</dbReference>
<dbReference type="GO" id="GO:0045259">
    <property type="term" value="C:proton-transporting ATP synthase complex"/>
    <property type="evidence" value="ECO:0007669"/>
    <property type="project" value="UniProtKB-KW"/>
</dbReference>
<dbReference type="GO" id="GO:0005524">
    <property type="term" value="F:ATP binding"/>
    <property type="evidence" value="ECO:0007669"/>
    <property type="project" value="UniProtKB-UniRule"/>
</dbReference>
<dbReference type="GO" id="GO:0046933">
    <property type="term" value="F:proton-transporting ATP synthase activity, rotational mechanism"/>
    <property type="evidence" value="ECO:0007669"/>
    <property type="project" value="UniProtKB-UniRule"/>
</dbReference>
<dbReference type="GO" id="GO:0042777">
    <property type="term" value="P:proton motive force-driven plasma membrane ATP synthesis"/>
    <property type="evidence" value="ECO:0007669"/>
    <property type="project" value="UniProtKB-UniRule"/>
</dbReference>
<dbReference type="CDD" id="cd12151">
    <property type="entry name" value="F1-ATPase_gamma"/>
    <property type="match status" value="1"/>
</dbReference>
<dbReference type="Gene3D" id="3.40.1380.10">
    <property type="match status" value="1"/>
</dbReference>
<dbReference type="Gene3D" id="1.10.287.80">
    <property type="entry name" value="ATP synthase, gamma subunit, helix hairpin domain"/>
    <property type="match status" value="2"/>
</dbReference>
<dbReference type="HAMAP" id="MF_00815">
    <property type="entry name" value="ATP_synth_gamma_bact"/>
    <property type="match status" value="1"/>
</dbReference>
<dbReference type="InterPro" id="IPR035968">
    <property type="entry name" value="ATP_synth_F1_ATPase_gsu"/>
</dbReference>
<dbReference type="InterPro" id="IPR000131">
    <property type="entry name" value="ATP_synth_F1_gsu"/>
</dbReference>
<dbReference type="InterPro" id="IPR022436">
    <property type="entry name" value="RPE2"/>
</dbReference>
<dbReference type="NCBIfam" id="TIGR01146">
    <property type="entry name" value="ATPsyn_F1gamma"/>
    <property type="match status" value="1"/>
</dbReference>
<dbReference type="NCBIfam" id="TIGR03774">
    <property type="entry name" value="RPE2"/>
    <property type="match status" value="1"/>
</dbReference>
<dbReference type="PANTHER" id="PTHR11693">
    <property type="entry name" value="ATP SYNTHASE GAMMA CHAIN"/>
    <property type="match status" value="1"/>
</dbReference>
<dbReference type="PANTHER" id="PTHR11693:SF22">
    <property type="entry name" value="ATP SYNTHASE SUBUNIT GAMMA, MITOCHONDRIAL"/>
    <property type="match status" value="1"/>
</dbReference>
<dbReference type="Pfam" id="PF00231">
    <property type="entry name" value="ATP-synt"/>
    <property type="match status" value="1"/>
</dbReference>
<dbReference type="PRINTS" id="PR00126">
    <property type="entry name" value="ATPASEGAMMA"/>
</dbReference>
<dbReference type="SUPFAM" id="SSF52943">
    <property type="entry name" value="ATP synthase (F1-ATPase), gamma subunit"/>
    <property type="match status" value="1"/>
</dbReference>